<dbReference type="EC" id="1.14.15.45" evidence="2"/>
<dbReference type="EC" id="1.14.15.46" evidence="10"/>
<dbReference type="EMBL" id="AF132944">
    <property type="protein sequence ID" value="AAD27719.1"/>
    <property type="molecule type" value="mRNA"/>
</dbReference>
<dbReference type="EMBL" id="AK296040">
    <property type="protein sequence ID" value="BAH12244.1"/>
    <property type="molecule type" value="mRNA"/>
</dbReference>
<dbReference type="EMBL" id="BX248000">
    <property type="protein sequence ID" value="CAD62332.1"/>
    <property type="molecule type" value="mRNA"/>
</dbReference>
<dbReference type="EMBL" id="AK222965">
    <property type="protein sequence ID" value="BAD96685.1"/>
    <property type="molecule type" value="mRNA"/>
</dbReference>
<dbReference type="EMBL" id="AC005480">
    <property type="status" value="NOT_ANNOTATED_CDS"/>
    <property type="molecule type" value="Genomic_DNA"/>
</dbReference>
<dbReference type="EMBL" id="CH471061">
    <property type="protein sequence ID" value="EAW81148.1"/>
    <property type="molecule type" value="Genomic_DNA"/>
</dbReference>
<dbReference type="EMBL" id="BC014181">
    <property type="protein sequence ID" value="AAH14181.1"/>
    <property type="molecule type" value="mRNA"/>
</dbReference>
<dbReference type="EMBL" id="BC014483">
    <property type="protein sequence ID" value="AAH14483.1"/>
    <property type="molecule type" value="mRNA"/>
</dbReference>
<dbReference type="CCDS" id="CCDS9823.1">
    <molecule id="Q9Y2Z9-1"/>
</dbReference>
<dbReference type="CCDS" id="CCDS9824.2">
    <molecule id="Q9Y2Z9-3"/>
</dbReference>
<dbReference type="RefSeq" id="NP_001412190.1">
    <molecule id="Q9Y2Z9-2"/>
    <property type="nucleotide sequence ID" value="NM_001425261.1"/>
</dbReference>
<dbReference type="RefSeq" id="NP_872282.1">
    <molecule id="Q9Y2Z9-1"/>
    <property type="nucleotide sequence ID" value="NM_182476.3"/>
</dbReference>
<dbReference type="RefSeq" id="NP_872286.2">
    <molecule id="Q9Y2Z9-3"/>
    <property type="nucleotide sequence ID" value="NM_182480.3"/>
</dbReference>
<dbReference type="SMR" id="Q9Y2Z9"/>
<dbReference type="BioGRID" id="119212">
    <property type="interactions" value="74"/>
</dbReference>
<dbReference type="ComplexPortal" id="CPX-3642">
    <property type="entry name" value="CoQ biosynthetic complex"/>
</dbReference>
<dbReference type="FunCoup" id="Q9Y2Z9">
    <property type="interactions" value="1177"/>
</dbReference>
<dbReference type="IntAct" id="Q9Y2Z9">
    <property type="interactions" value="74"/>
</dbReference>
<dbReference type="MINT" id="Q9Y2Z9"/>
<dbReference type="STRING" id="9606.ENSP00000333946"/>
<dbReference type="GlyGen" id="Q9Y2Z9">
    <property type="glycosylation" value="1 site, 1 O-linked glycan (1 site)"/>
</dbReference>
<dbReference type="iPTMnet" id="Q9Y2Z9"/>
<dbReference type="PhosphoSitePlus" id="Q9Y2Z9"/>
<dbReference type="SwissPalm" id="Q9Y2Z9"/>
<dbReference type="BioMuta" id="COQ6"/>
<dbReference type="DMDM" id="26006952"/>
<dbReference type="jPOST" id="Q9Y2Z9"/>
<dbReference type="MassIVE" id="Q9Y2Z9"/>
<dbReference type="PaxDb" id="9606-ENSP00000333946"/>
<dbReference type="PeptideAtlas" id="Q9Y2Z9"/>
<dbReference type="ProteomicsDB" id="6528"/>
<dbReference type="ProteomicsDB" id="69762"/>
<dbReference type="ProteomicsDB" id="85949">
    <molecule id="Q9Y2Z9-1"/>
</dbReference>
<dbReference type="Pumba" id="Q9Y2Z9"/>
<dbReference type="Antibodypedia" id="47346">
    <property type="antibodies" value="190 antibodies from 23 providers"/>
</dbReference>
<dbReference type="DNASU" id="51004"/>
<dbReference type="Ensembl" id="ENST00000334571.7">
    <molecule id="Q9Y2Z9-1"/>
    <property type="protein sequence ID" value="ENSP00000333946.2"/>
    <property type="gene ID" value="ENSG00000119723.17"/>
</dbReference>
<dbReference type="Ensembl" id="ENST00000394026.8">
    <molecule id="Q9Y2Z9-3"/>
    <property type="protein sequence ID" value="ENSP00000377594.4"/>
    <property type="gene ID" value="ENSG00000119723.17"/>
</dbReference>
<dbReference type="GeneID" id="51004"/>
<dbReference type="KEGG" id="hsa:51004"/>
<dbReference type="MANE-Select" id="ENST00000334571.7">
    <property type="protein sequence ID" value="ENSP00000333946.2"/>
    <property type="RefSeq nucleotide sequence ID" value="NM_182476.3"/>
    <property type="RefSeq protein sequence ID" value="NP_872282.1"/>
</dbReference>
<dbReference type="UCSC" id="uc001xph.4">
    <molecule id="Q9Y2Z9-1"/>
    <property type="organism name" value="human"/>
</dbReference>
<dbReference type="AGR" id="HGNC:20233"/>
<dbReference type="CTD" id="51004"/>
<dbReference type="DisGeNET" id="51004"/>
<dbReference type="GeneCards" id="COQ6"/>
<dbReference type="GeneReviews" id="COQ6"/>
<dbReference type="HGNC" id="HGNC:20233">
    <property type="gene designation" value="COQ6"/>
</dbReference>
<dbReference type="HPA" id="ENSG00000119723">
    <property type="expression patterns" value="Low tissue specificity"/>
</dbReference>
<dbReference type="MalaCards" id="COQ6"/>
<dbReference type="MIM" id="614647">
    <property type="type" value="gene"/>
</dbReference>
<dbReference type="MIM" id="614650">
    <property type="type" value="phenotype"/>
</dbReference>
<dbReference type="neXtProt" id="NX_Q9Y2Z9"/>
<dbReference type="OpenTargets" id="ENSG00000119723"/>
<dbReference type="Orphanet" id="280406">
    <property type="disease" value="Familial steroid-resistant nephrotic syndrome with sensorineural deafness"/>
</dbReference>
<dbReference type="Orphanet" id="93921">
    <property type="disease" value="Full schwannomatosis"/>
</dbReference>
<dbReference type="PharmGKB" id="PA134940980"/>
<dbReference type="VEuPathDB" id="HostDB:ENSG00000119723"/>
<dbReference type="eggNOG" id="KOG3855">
    <property type="taxonomic scope" value="Eukaryota"/>
</dbReference>
<dbReference type="GeneTree" id="ENSGT00390000015152"/>
<dbReference type="InParanoid" id="Q9Y2Z9"/>
<dbReference type="OMA" id="VKQMQVW"/>
<dbReference type="OrthoDB" id="683240at2759"/>
<dbReference type="PAN-GO" id="Q9Y2Z9">
    <property type="GO annotations" value="3 GO annotations based on evolutionary models"/>
</dbReference>
<dbReference type="PhylomeDB" id="Q9Y2Z9"/>
<dbReference type="TreeFam" id="TF105772"/>
<dbReference type="BioCyc" id="MetaCyc:ENSG00000119723-MONOMER"/>
<dbReference type="PathwayCommons" id="Q9Y2Z9"/>
<dbReference type="Reactome" id="R-HSA-2142789">
    <property type="pathway name" value="Ubiquinol biosynthesis"/>
</dbReference>
<dbReference type="SignaLink" id="Q9Y2Z9"/>
<dbReference type="UniPathway" id="UPA00232"/>
<dbReference type="BioGRID-ORCS" id="51004">
    <property type="hits" value="81 hits in 1171 CRISPR screens"/>
</dbReference>
<dbReference type="GenomeRNAi" id="51004"/>
<dbReference type="Pharos" id="Q9Y2Z9">
    <property type="development level" value="Tbio"/>
</dbReference>
<dbReference type="PRO" id="PR:Q9Y2Z9"/>
<dbReference type="Proteomes" id="UP000005640">
    <property type="component" value="Chromosome 14"/>
</dbReference>
<dbReference type="RNAct" id="Q9Y2Z9">
    <property type="molecule type" value="protein"/>
</dbReference>
<dbReference type="Bgee" id="ENSG00000119723">
    <property type="expression patterns" value="Expressed in right adrenal gland cortex and 133 other cell types or tissues"/>
</dbReference>
<dbReference type="ExpressionAtlas" id="Q9Y2Z9">
    <property type="expression patterns" value="baseline and differential"/>
</dbReference>
<dbReference type="GO" id="GO:0042995">
    <property type="term" value="C:cell projection"/>
    <property type="evidence" value="ECO:0007669"/>
    <property type="project" value="UniProtKB-SubCell"/>
</dbReference>
<dbReference type="GO" id="GO:0031314">
    <property type="term" value="C:extrinsic component of mitochondrial inner membrane"/>
    <property type="evidence" value="ECO:0007669"/>
    <property type="project" value="UniProtKB-UniRule"/>
</dbReference>
<dbReference type="GO" id="GO:0005794">
    <property type="term" value="C:Golgi apparatus"/>
    <property type="evidence" value="ECO:0007669"/>
    <property type="project" value="UniProtKB-SubCell"/>
</dbReference>
<dbReference type="GO" id="GO:0005743">
    <property type="term" value="C:mitochondrial inner membrane"/>
    <property type="evidence" value="ECO:0000314"/>
    <property type="project" value="ComplexPortal"/>
</dbReference>
<dbReference type="GO" id="GO:0005739">
    <property type="term" value="C:mitochondrion"/>
    <property type="evidence" value="ECO:0000314"/>
    <property type="project" value="LIFEdb"/>
</dbReference>
<dbReference type="GO" id="GO:0110142">
    <property type="term" value="C:ubiquinone biosynthesis complex"/>
    <property type="evidence" value="ECO:0000353"/>
    <property type="project" value="ComplexPortal"/>
</dbReference>
<dbReference type="GO" id="GO:0120538">
    <property type="term" value="F:2-methoxy-6-polyprenolphenol 4-hydroxylase activity"/>
    <property type="evidence" value="ECO:0000314"/>
    <property type="project" value="UniProtKB"/>
</dbReference>
<dbReference type="GO" id="GO:0106364">
    <property type="term" value="F:4-hydroxy-3-all-trans-polyprenylbenzoate oxygenase activity"/>
    <property type="evidence" value="ECO:0000314"/>
    <property type="project" value="UniProtKB"/>
</dbReference>
<dbReference type="GO" id="GO:0071949">
    <property type="term" value="F:FAD binding"/>
    <property type="evidence" value="ECO:0007669"/>
    <property type="project" value="InterPro"/>
</dbReference>
<dbReference type="GO" id="GO:0016491">
    <property type="term" value="F:oxidoreductase activity"/>
    <property type="evidence" value="ECO:0000318"/>
    <property type="project" value="GO_Central"/>
</dbReference>
<dbReference type="GO" id="GO:0016709">
    <property type="term" value="F:oxidoreductase activity, acting on paired donors, with incorporation or reduction of molecular oxygen, NAD(P)H as one donor, and incorporation of one atom of oxygen"/>
    <property type="evidence" value="ECO:0007669"/>
    <property type="project" value="Ensembl"/>
</dbReference>
<dbReference type="GO" id="GO:0016712">
    <property type="term" value="F:oxidoreductase activity, acting on paired donors, with incorporation or reduction of molecular oxygen, reduced flavin or flavoprotein as one donor, and incorporation of one atom of oxygen"/>
    <property type="evidence" value="ECO:0007669"/>
    <property type="project" value="UniProtKB-UniRule"/>
</dbReference>
<dbReference type="GO" id="GO:0006744">
    <property type="term" value="P:ubiquinone biosynthetic process"/>
    <property type="evidence" value="ECO:0000314"/>
    <property type="project" value="UniProtKB"/>
</dbReference>
<dbReference type="FunFam" id="3.30.9.10:FF:000111">
    <property type="entry name" value="Ubiquinone biosynthesis monooxygenase COQ6, mitochondrial"/>
    <property type="match status" value="1"/>
</dbReference>
<dbReference type="FunFam" id="3.50.50.60:FF:000066">
    <property type="entry name" value="Ubiquinone biosynthesis monooxygenase COQ6, mitochondrial"/>
    <property type="match status" value="1"/>
</dbReference>
<dbReference type="FunFam" id="3.50.50.60:FF:000086">
    <property type="entry name" value="Ubiquinone biosynthesis monooxygenase COQ6, mitochondrial"/>
    <property type="match status" value="1"/>
</dbReference>
<dbReference type="Gene3D" id="3.50.50.60">
    <property type="entry name" value="FAD/NAD(P)-binding domain"/>
    <property type="match status" value="2"/>
</dbReference>
<dbReference type="HAMAP" id="MF_03193">
    <property type="entry name" value="COQ6_monooxygenase"/>
    <property type="match status" value="1"/>
</dbReference>
<dbReference type="InterPro" id="IPR002938">
    <property type="entry name" value="FAD-bd"/>
</dbReference>
<dbReference type="InterPro" id="IPR036188">
    <property type="entry name" value="FAD/NAD-bd_sf"/>
</dbReference>
<dbReference type="InterPro" id="IPR018168">
    <property type="entry name" value="Ubi_Hdrlase_CS"/>
</dbReference>
<dbReference type="InterPro" id="IPR010971">
    <property type="entry name" value="UbiH/COQ6"/>
</dbReference>
<dbReference type="InterPro" id="IPR051205">
    <property type="entry name" value="UbiH/COQ6_monooxygenase"/>
</dbReference>
<dbReference type="InterPro" id="IPR000689">
    <property type="entry name" value="UbQ_mOase_COQ6"/>
</dbReference>
<dbReference type="NCBIfam" id="TIGR01989">
    <property type="entry name" value="COQ6"/>
    <property type="match status" value="1"/>
</dbReference>
<dbReference type="NCBIfam" id="TIGR01988">
    <property type="entry name" value="Ubi-OHases"/>
    <property type="match status" value="1"/>
</dbReference>
<dbReference type="PANTHER" id="PTHR43876">
    <property type="entry name" value="UBIQUINONE BIOSYNTHESIS MONOOXYGENASE COQ6, MITOCHONDRIAL"/>
    <property type="match status" value="1"/>
</dbReference>
<dbReference type="PANTHER" id="PTHR43876:SF7">
    <property type="entry name" value="UBIQUINONE BIOSYNTHESIS MONOOXYGENASE COQ6, MITOCHONDRIAL"/>
    <property type="match status" value="1"/>
</dbReference>
<dbReference type="Pfam" id="PF01494">
    <property type="entry name" value="FAD_binding_3"/>
    <property type="match status" value="2"/>
</dbReference>
<dbReference type="PRINTS" id="PR00420">
    <property type="entry name" value="RNGMNOXGNASE"/>
</dbReference>
<dbReference type="SUPFAM" id="SSF51905">
    <property type="entry name" value="FAD/NAD(P)-binding domain"/>
    <property type="match status" value="1"/>
</dbReference>
<dbReference type="PROSITE" id="PS01304">
    <property type="entry name" value="UBIH"/>
    <property type="match status" value="1"/>
</dbReference>
<accession>Q9Y2Z9</accession>
<accession>B7Z3K8</accession>
<accession>Q53GG6</accession>
<accession>Q86U30</accession>
<accession>Q96CA1</accession>
<accession>Q96CK2</accession>
<organism>
    <name type="scientific">Homo sapiens</name>
    <name type="common">Human</name>
    <dbReference type="NCBI Taxonomy" id="9606"/>
    <lineage>
        <taxon>Eukaryota</taxon>
        <taxon>Metazoa</taxon>
        <taxon>Chordata</taxon>
        <taxon>Craniata</taxon>
        <taxon>Vertebrata</taxon>
        <taxon>Euteleostomi</taxon>
        <taxon>Mammalia</taxon>
        <taxon>Eutheria</taxon>
        <taxon>Euarchontoglires</taxon>
        <taxon>Primates</taxon>
        <taxon>Haplorrhini</taxon>
        <taxon>Catarrhini</taxon>
        <taxon>Hominidae</taxon>
        <taxon>Homo</taxon>
    </lineage>
</organism>
<reference key="1">
    <citation type="journal article" date="2000" name="Genome Res.">
        <title>Identification of novel human genes evolutionarily conserved in Caenorhabditis elegans by comparative proteomics.</title>
        <authorList>
            <person name="Lai C.-H."/>
            <person name="Chou C.-Y."/>
            <person name="Ch'ang L.-Y."/>
            <person name="Liu C.-S."/>
            <person name="Lin W.-C."/>
        </authorList>
    </citation>
    <scope>NUCLEOTIDE SEQUENCE [LARGE SCALE MRNA] (ISOFORM 1)</scope>
</reference>
<reference key="2">
    <citation type="journal article" date="2004" name="Nat. Genet.">
        <title>Complete sequencing and characterization of 21,243 full-length human cDNAs.</title>
        <authorList>
            <person name="Ota T."/>
            <person name="Suzuki Y."/>
            <person name="Nishikawa T."/>
            <person name="Otsuki T."/>
            <person name="Sugiyama T."/>
            <person name="Irie R."/>
            <person name="Wakamatsu A."/>
            <person name="Hayashi K."/>
            <person name="Sato H."/>
            <person name="Nagai K."/>
            <person name="Kimura K."/>
            <person name="Makita H."/>
            <person name="Sekine M."/>
            <person name="Obayashi M."/>
            <person name="Nishi T."/>
            <person name="Shibahara T."/>
            <person name="Tanaka T."/>
            <person name="Ishii S."/>
            <person name="Yamamoto J."/>
            <person name="Saito K."/>
            <person name="Kawai Y."/>
            <person name="Isono Y."/>
            <person name="Nakamura Y."/>
            <person name="Nagahari K."/>
            <person name="Murakami K."/>
            <person name="Yasuda T."/>
            <person name="Iwayanagi T."/>
            <person name="Wagatsuma M."/>
            <person name="Shiratori A."/>
            <person name="Sudo H."/>
            <person name="Hosoiri T."/>
            <person name="Kaku Y."/>
            <person name="Kodaira H."/>
            <person name="Kondo H."/>
            <person name="Sugawara M."/>
            <person name="Takahashi M."/>
            <person name="Kanda K."/>
            <person name="Yokoi T."/>
            <person name="Furuya T."/>
            <person name="Kikkawa E."/>
            <person name="Omura Y."/>
            <person name="Abe K."/>
            <person name="Kamihara K."/>
            <person name="Katsuta N."/>
            <person name="Sato K."/>
            <person name="Tanikawa M."/>
            <person name="Yamazaki M."/>
            <person name="Ninomiya K."/>
            <person name="Ishibashi T."/>
            <person name="Yamashita H."/>
            <person name="Murakawa K."/>
            <person name="Fujimori K."/>
            <person name="Tanai H."/>
            <person name="Kimata M."/>
            <person name="Watanabe M."/>
            <person name="Hiraoka S."/>
            <person name="Chiba Y."/>
            <person name="Ishida S."/>
            <person name="Ono Y."/>
            <person name="Takiguchi S."/>
            <person name="Watanabe S."/>
            <person name="Yosida M."/>
            <person name="Hotuta T."/>
            <person name="Kusano J."/>
            <person name="Kanehori K."/>
            <person name="Takahashi-Fujii A."/>
            <person name="Hara H."/>
            <person name="Tanase T.-O."/>
            <person name="Nomura Y."/>
            <person name="Togiya S."/>
            <person name="Komai F."/>
            <person name="Hara R."/>
            <person name="Takeuchi K."/>
            <person name="Arita M."/>
            <person name="Imose N."/>
            <person name="Musashino K."/>
            <person name="Yuuki H."/>
            <person name="Oshima A."/>
            <person name="Sasaki N."/>
            <person name="Aotsuka S."/>
            <person name="Yoshikawa Y."/>
            <person name="Matsunawa H."/>
            <person name="Ichihara T."/>
            <person name="Shiohata N."/>
            <person name="Sano S."/>
            <person name="Moriya S."/>
            <person name="Momiyama H."/>
            <person name="Satoh N."/>
            <person name="Takami S."/>
            <person name="Terashima Y."/>
            <person name="Suzuki O."/>
            <person name="Nakagawa S."/>
            <person name="Senoh A."/>
            <person name="Mizoguchi H."/>
            <person name="Goto Y."/>
            <person name="Shimizu F."/>
            <person name="Wakebe H."/>
            <person name="Hishigaki H."/>
            <person name="Watanabe T."/>
            <person name="Sugiyama A."/>
            <person name="Takemoto M."/>
            <person name="Kawakami B."/>
            <person name="Yamazaki M."/>
            <person name="Watanabe K."/>
            <person name="Kumagai A."/>
            <person name="Itakura S."/>
            <person name="Fukuzumi Y."/>
            <person name="Fujimori Y."/>
            <person name="Komiyama M."/>
            <person name="Tashiro H."/>
            <person name="Tanigami A."/>
            <person name="Fujiwara T."/>
            <person name="Ono T."/>
            <person name="Yamada K."/>
            <person name="Fujii Y."/>
            <person name="Ozaki K."/>
            <person name="Hirao M."/>
            <person name="Ohmori Y."/>
            <person name="Kawabata A."/>
            <person name="Hikiji T."/>
            <person name="Kobatake N."/>
            <person name="Inagaki H."/>
            <person name="Ikema Y."/>
            <person name="Okamoto S."/>
            <person name="Okitani R."/>
            <person name="Kawakami T."/>
            <person name="Noguchi S."/>
            <person name="Itoh T."/>
            <person name="Shigeta K."/>
            <person name="Senba T."/>
            <person name="Matsumura K."/>
            <person name="Nakajima Y."/>
            <person name="Mizuno T."/>
            <person name="Morinaga M."/>
            <person name="Sasaki M."/>
            <person name="Togashi T."/>
            <person name="Oyama M."/>
            <person name="Hata H."/>
            <person name="Watanabe M."/>
            <person name="Komatsu T."/>
            <person name="Mizushima-Sugano J."/>
            <person name="Satoh T."/>
            <person name="Shirai Y."/>
            <person name="Takahashi Y."/>
            <person name="Nakagawa K."/>
            <person name="Okumura K."/>
            <person name="Nagase T."/>
            <person name="Nomura N."/>
            <person name="Kikuchi H."/>
            <person name="Masuho Y."/>
            <person name="Yamashita R."/>
            <person name="Nakai K."/>
            <person name="Yada T."/>
            <person name="Nakamura Y."/>
            <person name="Ohara O."/>
            <person name="Isogai T."/>
            <person name="Sugano S."/>
        </authorList>
    </citation>
    <scope>NUCLEOTIDE SEQUENCE [LARGE SCALE MRNA] (ISOFORM 3)</scope>
    <source>
        <tissue>Subthalamic nucleus</tissue>
    </source>
</reference>
<reference key="3">
    <citation type="submission" date="2003-02" db="EMBL/GenBank/DDBJ databases">
        <title>Full-length cDNA libraries and normalization.</title>
        <authorList>
            <person name="Li W.B."/>
            <person name="Gruber C."/>
            <person name="Jessee J."/>
            <person name="Polayes D."/>
        </authorList>
    </citation>
    <scope>NUCLEOTIDE SEQUENCE [LARGE SCALE MRNA] (ISOFORM 2)</scope>
    <source>
        <tissue>Fetal liver</tissue>
    </source>
</reference>
<reference key="4">
    <citation type="submission" date="2005-04" db="EMBL/GenBank/DDBJ databases">
        <authorList>
            <person name="Suzuki Y."/>
            <person name="Sugano S."/>
            <person name="Totoki Y."/>
            <person name="Toyoda A."/>
            <person name="Takeda T."/>
            <person name="Sakaki Y."/>
            <person name="Tanaka A."/>
            <person name="Yokoyama S."/>
        </authorList>
    </citation>
    <scope>NUCLEOTIDE SEQUENCE [LARGE SCALE MRNA] (ISOFORM 1)</scope>
    <scope>VARIANT MET-406</scope>
    <source>
        <tissue>Heart</tissue>
    </source>
</reference>
<reference key="5">
    <citation type="journal article" date="2003" name="Nature">
        <title>The DNA sequence and analysis of human chromosome 14.</title>
        <authorList>
            <person name="Heilig R."/>
            <person name="Eckenberg R."/>
            <person name="Petit J.-L."/>
            <person name="Fonknechten N."/>
            <person name="Da Silva C."/>
            <person name="Cattolico L."/>
            <person name="Levy M."/>
            <person name="Barbe V."/>
            <person name="De Berardinis V."/>
            <person name="Ureta-Vidal A."/>
            <person name="Pelletier E."/>
            <person name="Vico V."/>
            <person name="Anthouard V."/>
            <person name="Rowen L."/>
            <person name="Madan A."/>
            <person name="Qin S."/>
            <person name="Sun H."/>
            <person name="Du H."/>
            <person name="Pepin K."/>
            <person name="Artiguenave F."/>
            <person name="Robert C."/>
            <person name="Cruaud C."/>
            <person name="Bruels T."/>
            <person name="Jaillon O."/>
            <person name="Friedlander L."/>
            <person name="Samson G."/>
            <person name="Brottier P."/>
            <person name="Cure S."/>
            <person name="Segurens B."/>
            <person name="Aniere F."/>
            <person name="Samain S."/>
            <person name="Crespeau H."/>
            <person name="Abbasi N."/>
            <person name="Aiach N."/>
            <person name="Boscus D."/>
            <person name="Dickhoff R."/>
            <person name="Dors M."/>
            <person name="Dubois I."/>
            <person name="Friedman C."/>
            <person name="Gouyvenoux M."/>
            <person name="James R."/>
            <person name="Madan A."/>
            <person name="Mairey-Estrada B."/>
            <person name="Mangenot S."/>
            <person name="Martins N."/>
            <person name="Menard M."/>
            <person name="Oztas S."/>
            <person name="Ratcliffe A."/>
            <person name="Shaffer T."/>
            <person name="Trask B."/>
            <person name="Vacherie B."/>
            <person name="Bellemere C."/>
            <person name="Belser C."/>
            <person name="Besnard-Gonnet M."/>
            <person name="Bartol-Mavel D."/>
            <person name="Boutard M."/>
            <person name="Briez-Silla S."/>
            <person name="Combette S."/>
            <person name="Dufosse-Laurent V."/>
            <person name="Ferron C."/>
            <person name="Lechaplais C."/>
            <person name="Louesse C."/>
            <person name="Muselet D."/>
            <person name="Magdelenat G."/>
            <person name="Pateau E."/>
            <person name="Petit E."/>
            <person name="Sirvain-Trukniewicz P."/>
            <person name="Trybou A."/>
            <person name="Vega-Czarny N."/>
            <person name="Bataille E."/>
            <person name="Bluet E."/>
            <person name="Bordelais I."/>
            <person name="Dubois M."/>
            <person name="Dumont C."/>
            <person name="Guerin T."/>
            <person name="Haffray S."/>
            <person name="Hammadi R."/>
            <person name="Muanga J."/>
            <person name="Pellouin V."/>
            <person name="Robert D."/>
            <person name="Wunderle E."/>
            <person name="Gauguet G."/>
            <person name="Roy A."/>
            <person name="Sainte-Marthe L."/>
            <person name="Verdier J."/>
            <person name="Verdier-Discala C."/>
            <person name="Hillier L.W."/>
            <person name="Fulton L."/>
            <person name="McPherson J."/>
            <person name="Matsuda F."/>
            <person name="Wilson R."/>
            <person name="Scarpelli C."/>
            <person name="Gyapay G."/>
            <person name="Wincker P."/>
            <person name="Saurin W."/>
            <person name="Quetier F."/>
            <person name="Waterston R."/>
            <person name="Hood L."/>
            <person name="Weissenbach J."/>
        </authorList>
    </citation>
    <scope>NUCLEOTIDE SEQUENCE [LARGE SCALE GENOMIC DNA]</scope>
</reference>
<reference key="6">
    <citation type="submission" date="2005-07" db="EMBL/GenBank/DDBJ databases">
        <authorList>
            <person name="Mural R.J."/>
            <person name="Istrail S."/>
            <person name="Sutton G.G."/>
            <person name="Florea L."/>
            <person name="Halpern A.L."/>
            <person name="Mobarry C.M."/>
            <person name="Lippert R."/>
            <person name="Walenz B."/>
            <person name="Shatkay H."/>
            <person name="Dew I."/>
            <person name="Miller J.R."/>
            <person name="Flanigan M.J."/>
            <person name="Edwards N.J."/>
            <person name="Bolanos R."/>
            <person name="Fasulo D."/>
            <person name="Halldorsson B.V."/>
            <person name="Hannenhalli S."/>
            <person name="Turner R."/>
            <person name="Yooseph S."/>
            <person name="Lu F."/>
            <person name="Nusskern D.R."/>
            <person name="Shue B.C."/>
            <person name="Zheng X.H."/>
            <person name="Zhong F."/>
            <person name="Delcher A.L."/>
            <person name="Huson D.H."/>
            <person name="Kravitz S.A."/>
            <person name="Mouchard L."/>
            <person name="Reinert K."/>
            <person name="Remington K.A."/>
            <person name="Clark A.G."/>
            <person name="Waterman M.S."/>
            <person name="Eichler E.E."/>
            <person name="Adams M.D."/>
            <person name="Hunkapiller M.W."/>
            <person name="Myers E.W."/>
            <person name="Venter J.C."/>
        </authorList>
    </citation>
    <scope>NUCLEOTIDE SEQUENCE [LARGE SCALE GENOMIC DNA]</scope>
</reference>
<reference key="7">
    <citation type="journal article" date="2004" name="Genome Res.">
        <title>The status, quality, and expansion of the NIH full-length cDNA project: the Mammalian Gene Collection (MGC).</title>
        <authorList>
            <consortium name="The MGC Project Team"/>
        </authorList>
    </citation>
    <scope>NUCLEOTIDE SEQUENCE [LARGE SCALE MRNA] (ISOFORM 1)</scope>
    <scope>VARIANT LYS-287</scope>
    <source>
        <tissue>Colon</tissue>
        <tissue>Lung</tissue>
    </source>
</reference>
<reference key="8">
    <citation type="journal article" date="2011" name="BMC Syst. Biol.">
        <title>Initial characterization of the human central proteome.</title>
        <authorList>
            <person name="Burkard T.R."/>
            <person name="Planyavsky M."/>
            <person name="Kaupe I."/>
            <person name="Breitwieser F.P."/>
            <person name="Buerckstuemmer T."/>
            <person name="Bennett K.L."/>
            <person name="Superti-Furga G."/>
            <person name="Colinge J."/>
        </authorList>
    </citation>
    <scope>IDENTIFICATION BY MASS SPECTROMETRY [LARGE SCALE ANALYSIS]</scope>
</reference>
<reference key="9">
    <citation type="journal article" date="2013" name="J. Clin. Invest.">
        <title>ADCK4 mutations promote steroid-resistant nephrotic syndrome through CoQ10 biosynthesis disruption.</title>
        <authorList>
            <person name="Ashraf S."/>
            <person name="Gee H.Y."/>
            <person name="Woerner S."/>
            <person name="Xie L.X."/>
            <person name="Vega-Warner V."/>
            <person name="Lovric S."/>
            <person name="Fang H."/>
            <person name="Song X."/>
            <person name="Cattran D.C."/>
            <person name="Avila-Casado C."/>
            <person name="Paterson A.D."/>
            <person name="Nitschke P."/>
            <person name="Bole-Feysot C."/>
            <person name="Cochat P."/>
            <person name="Esteve-Rudd J."/>
            <person name="Haberberger B."/>
            <person name="Allen S.J."/>
            <person name="Zhou W."/>
            <person name="Airik R."/>
            <person name="Otto E.A."/>
            <person name="Barua M."/>
            <person name="Al-Hamed M.H."/>
            <person name="Kari J.A."/>
            <person name="Evans J."/>
            <person name="Bierzynska A."/>
            <person name="Saleem M.A."/>
            <person name="Bockenhauer D."/>
            <person name="Kleta R."/>
            <person name="El Desoky S."/>
            <person name="Hacihamdioglu D.O."/>
            <person name="Gok F."/>
            <person name="Washburn J."/>
            <person name="Wiggins R.C."/>
            <person name="Choi M."/>
            <person name="Lifton R.P."/>
            <person name="Levy S."/>
            <person name="Han Z."/>
            <person name="Salviati L."/>
            <person name="Prokisch H."/>
            <person name="Williams D.S."/>
            <person name="Pollak M."/>
            <person name="Clarke C.F."/>
            <person name="Pei Y."/>
            <person name="Antignac C."/>
            <person name="Hildebrandt F."/>
        </authorList>
    </citation>
    <scope>INTERACTION WITH COQ8B AND COQ7</scope>
</reference>
<reference key="10">
    <citation type="journal article" date="2015" name="J. Biol. Chem.">
        <title>Coq6 is responsible for the C4-deamination reaction in coenzyme Q biosynthesis in Saccharomyces cerevisiae.</title>
        <authorList>
            <person name="Ozeir M."/>
            <person name="Pelosi L."/>
            <person name="Ismail A."/>
            <person name="Mellot-Draznieks C."/>
            <person name="Fontecave M."/>
            <person name="Pierrel F."/>
        </authorList>
    </citation>
    <scope>FUNCTION</scope>
    <scope>CATALYTIC ACTIVITY</scope>
</reference>
<reference key="11">
    <citation type="journal article" date="2015" name="Proteomics">
        <title>N-terminome analysis of the human mitochondrial proteome.</title>
        <authorList>
            <person name="Vaca Jacome A.S."/>
            <person name="Rabilloud T."/>
            <person name="Schaeffer-Reiss C."/>
            <person name="Rompais M."/>
            <person name="Ayoub D."/>
            <person name="Lane L."/>
            <person name="Bairoch A."/>
            <person name="Van Dorsselaer A."/>
            <person name="Carapito C."/>
        </authorList>
    </citation>
    <scope>IDENTIFICATION BY MASS SPECTROMETRY [LARGE SCALE ANALYSIS]</scope>
</reference>
<reference key="12">
    <citation type="journal article" date="2016" name="Mol. Cell">
        <title>Mitochondrial protein interaction mapping identifies regulators of respiratory chain function.</title>
        <authorList>
            <person name="Floyd B.J."/>
            <person name="Wilkerson E.M."/>
            <person name="Veling M.T."/>
            <person name="Minogue C.E."/>
            <person name="Xia C."/>
            <person name="Beebe E.T."/>
            <person name="Wrobel R.L."/>
            <person name="Cho H."/>
            <person name="Kremer L.S."/>
            <person name="Alston C.L."/>
            <person name="Gromek K.A."/>
            <person name="Dolan B.K."/>
            <person name="Ulbrich A."/>
            <person name="Stefely J.A."/>
            <person name="Bohl S.L."/>
            <person name="Werner K.M."/>
            <person name="Jochem A."/>
            <person name="Westphall M.S."/>
            <person name="Rensvold J.W."/>
            <person name="Taylor R.W."/>
            <person name="Prokisch H."/>
            <person name="Kim J.J."/>
            <person name="Coon J.J."/>
            <person name="Pagliarini D.J."/>
        </authorList>
    </citation>
    <scope>SUBCELLULAR LOCATION</scope>
    <scope>IDENTIFICATION IN THE COQ ENZYME COMPLEX</scope>
</reference>
<reference key="13">
    <citation type="journal article" date="2024" name="Nat. Catal.">
        <title>In vitro construction of the COQ metabolon unveils the molecular determinants of coenzyme Q biosynthesis.</title>
        <authorList>
            <person name="Nicoll C.R."/>
            <person name="Alvigini L."/>
            <person name="Gottinger A."/>
            <person name="Cecchini D."/>
            <person name="Mannucci B."/>
            <person name="Corana F."/>
            <person name="Mascotti M.L."/>
            <person name="Mattevi A."/>
        </authorList>
    </citation>
    <scope>FUNCTION</scope>
    <scope>CATALYTIC ACTIVITY</scope>
    <scope>PATHWAY</scope>
    <scope>COFACTOR</scope>
</reference>
<reference key="14">
    <citation type="journal article" date="2011" name="J. Clin. Invest.">
        <title>COQ6 mutations in human patients produce nephrotic syndrome with sensorineural deafness.</title>
        <authorList>
            <person name="Heeringa S.F."/>
            <person name="Chernin G."/>
            <person name="Chaki M."/>
            <person name="Zhou W."/>
            <person name="Sloan A.J."/>
            <person name="Ji Z."/>
            <person name="Xie L.X."/>
            <person name="Salviati L."/>
            <person name="Hurd T.W."/>
            <person name="Vega-Warner V."/>
            <person name="Killen P.D."/>
            <person name="Raphael Y."/>
            <person name="Ashraf S."/>
            <person name="Ovunc B."/>
            <person name="Schoeb D.S."/>
            <person name="McLaughlin H.M."/>
            <person name="Airik R."/>
            <person name="Vlangos C.N."/>
            <person name="Gbadegesin R."/>
            <person name="Hinkes B."/>
            <person name="Saisawat P."/>
            <person name="Trevisson E."/>
            <person name="Doimo M."/>
            <person name="Casarin A."/>
            <person name="Pertegato V."/>
            <person name="Giorgi G."/>
            <person name="Prokisch H."/>
            <person name="Rotig A."/>
            <person name="Nurnberg G."/>
            <person name="Becker C."/>
            <person name="Wang S."/>
            <person name="Ozaltin F."/>
            <person name="Topaloglu R."/>
            <person name="Bakkaloglu A."/>
            <person name="Bakkaloglu S.A."/>
            <person name="Muller D."/>
            <person name="Beissert A."/>
            <person name="Mir S."/>
            <person name="Berdeli A."/>
            <person name="Varpizen S."/>
            <person name="Zenker M."/>
            <person name="Matejas V."/>
            <person name="Santos-Ocana C."/>
            <person name="Navas P."/>
            <person name="Kusakabe T."/>
            <person name="Kispert A."/>
            <person name="Akman S."/>
            <person name="Soliman N.A."/>
            <person name="Krick S."/>
            <person name="Mundel P."/>
            <person name="Reiser J."/>
            <person name="Nurnberg P."/>
            <person name="Clarke C.F."/>
            <person name="Wiggins R.C."/>
            <person name="Faul C."/>
            <person name="Hildebrandt F."/>
        </authorList>
    </citation>
    <scope>VARIANTS COQ10D6 ARG-255 AND ASP-353</scope>
    <scope>TISSUE SPECIFICITY</scope>
    <scope>ALTERNATIVE SPLICING</scope>
</reference>
<reference key="15">
    <citation type="journal article" date="2014" name="Genet. Med.">
        <title>A germline missense mutation in COQ6 is associated with susceptibility to familial schwannomatosis.</title>
        <authorList>
            <person name="Zhang K."/>
            <person name="Lin J.W."/>
            <person name="Wang J."/>
            <person name="Wu X."/>
            <person name="Gao H."/>
            <person name="Hsieh Y.C."/>
            <person name="Hwu P."/>
            <person name="Liu Y.R."/>
            <person name="Su L."/>
            <person name="Chiou H.Y."/>
            <person name="Wang D."/>
            <person name="Yuan Y.C."/>
            <person name="Whang-Peng J."/>
            <person name="Chiu W.T."/>
            <person name="Yen Y."/>
        </authorList>
    </citation>
    <scope>VARIANT HIS-208</scope>
    <scope>CHARACTERIZATION OF VARIANT HIS-208</scope>
    <scope>INVOLVEMENT IN SCHWANNOMATOSIS SUSCEPTIBILITY</scope>
</reference>
<reference key="16">
    <citation type="journal article" date="2017" name="Clin. Genet.">
        <title>Further phenotypic heterogeneity of CoQ10 deficiency associated with steroid resistant nephrotic syndrome and novel COQ2 and COQ6 variants.</title>
        <authorList>
            <person name="Gigante M."/>
            <person name="Diella S."/>
            <person name="Santangelo L."/>
            <person name="Trevisson E."/>
            <person name="Acosta M.J."/>
            <person name="Amatruda M."/>
            <person name="Finzi G."/>
            <person name="Caridi G."/>
            <person name="Murer L."/>
            <person name="Accetturo M."/>
            <person name="Ranieri E."/>
            <person name="Ghiggeri G.M."/>
            <person name="Giordano M."/>
            <person name="Grandaliano G."/>
            <person name="Salviati L."/>
            <person name="Gesualdo L."/>
        </authorList>
    </citation>
    <scope>VARIANT COQ10D6 LEU-261</scope>
</reference>
<name>COQ6_HUMAN</name>
<evidence type="ECO:0000255" key="1"/>
<evidence type="ECO:0000255" key="2">
    <source>
        <dbReference type="HAMAP-Rule" id="MF_03193"/>
    </source>
</evidence>
<evidence type="ECO:0000269" key="3">
    <source>
    </source>
</evidence>
<evidence type="ECO:0000269" key="4">
    <source>
    </source>
</evidence>
<evidence type="ECO:0000269" key="5">
    <source>
    </source>
</evidence>
<evidence type="ECO:0000269" key="6">
    <source>
    </source>
</evidence>
<evidence type="ECO:0000269" key="7">
    <source>
    </source>
</evidence>
<evidence type="ECO:0000269" key="8">
    <source>
    </source>
</evidence>
<evidence type="ECO:0000269" key="9">
    <source>
    </source>
</evidence>
<evidence type="ECO:0000269" key="10">
    <source>
    </source>
</evidence>
<evidence type="ECO:0000269" key="11">
    <source ref="4"/>
</evidence>
<evidence type="ECO:0000303" key="12">
    <source>
    </source>
</evidence>
<evidence type="ECO:0000303" key="13">
    <source ref="3"/>
</evidence>
<evidence type="ECO:0000305" key="14"/>
<evidence type="ECO:0000305" key="15">
    <source>
    </source>
</evidence>
<evidence type="ECO:0000305" key="16">
    <source>
    </source>
</evidence>
<sequence length="468" mass="50870">MAARLVSRCGAVRAAPHSGPLVSWRRWSGASTDTVYDVVVSGGGLVGAAMACALGYDIHFHDKKILLLEAGPKKVLEKLSETYSNRVSSISPGSATLLSSFGAWDHICNMRYRAFRRMQVWDACSEALIMFDKDNLDDMGYIVENDVIMHALTKQLEAVSDRVTVLYRSKAIRYTWPCPFPMADSSPWVHITLGDGSTFQTKLLIGADGHNSGVRQAVGIQNVSWNYDQSAVVATLHLSEATENNVAWQRFLPSGPIALLPLSDTLSSLVWSTSHEHAAELVSMDEEKFVDAVNSAFWSDADHTDFIDTAGAMLQYAVSLLKPTKVSARQLPPSVARVDAKSRVLFPLGLGHAAEYVRPRVALIGDAAHRVHPLAGQGVNMGFGDISSLAHHLSTAAFNGKDLGSVSHLTGYETERQRHNTALLAATDLLKRLYSTSASPLVLLRTWGLQATNAVSPLKEQIMAFASK</sequence>
<keyword id="KW-0025">Alternative splicing</keyword>
<keyword id="KW-0966">Cell projection</keyword>
<keyword id="KW-0209">Deafness</keyword>
<keyword id="KW-0225">Disease variant</keyword>
<keyword id="KW-0274">FAD</keyword>
<keyword id="KW-0285">Flavoprotein</keyword>
<keyword id="KW-0333">Golgi apparatus</keyword>
<keyword id="KW-0472">Membrane</keyword>
<keyword id="KW-0496">Mitochondrion</keyword>
<keyword id="KW-0999">Mitochondrion inner membrane</keyword>
<keyword id="KW-0503">Monooxygenase</keyword>
<keyword id="KW-0560">Oxidoreductase</keyword>
<keyword id="KW-1274">Primary mitochondrial disease</keyword>
<keyword id="KW-1267">Proteomics identification</keyword>
<keyword id="KW-1185">Reference proteome</keyword>
<keyword id="KW-0809">Transit peptide</keyword>
<keyword id="KW-0831">Ubiquinone biosynthesis</keyword>
<feature type="transit peptide" description="Mitochondrion" evidence="1">
    <location>
        <begin position="1"/>
        <end position="28"/>
    </location>
</feature>
<feature type="chain" id="PRO_0000207583" description="Ubiquinone biosynthesis monooxygenase COQ6, mitochondrial">
    <location>
        <begin position="29"/>
        <end position="468"/>
    </location>
</feature>
<feature type="splice variant" id="VSP_044060" description="In isoform 2." evidence="13">
    <original>AARLVSRCGAVRAAPHSGPLVSWRRWSGASTDTVYDVVVSGGGLVGAAMACALGYDIHFHDKKILLLEAGPKKVLEKLSETYSNRVSSISPGSATLLSSFGAWDHICNMRYRAFRRMQ</original>
    <variation>IFTFMTRKSCCSKQVQRKYWRNCQKLTATGSAPFPLALQRFSV</variation>
    <location>
        <begin position="2"/>
        <end position="119"/>
    </location>
</feature>
<feature type="splice variant" id="VSP_044061" description="In isoform 3." evidence="12">
    <original>AARLVSRCGAVRAAPHSGPLVSWRRWSGASTDTVYDVVVSGGGLVGAAMACAL</original>
    <variation>RGQGPPLSSFGVWLASRAASDPSRPRRQ</variation>
    <location>
        <begin position="2"/>
        <end position="54"/>
    </location>
</feature>
<feature type="splice variant" id="VSP_044062" description="In isoform 2." evidence="13">
    <location>
        <begin position="460"/>
        <end position="461"/>
    </location>
</feature>
<feature type="sequence variant" id="VAR_075225" description="Found in patients with Schwannomatosis; likely pathogenic; loss of function; dbSNP:rs606231262." evidence="6">
    <original>D</original>
    <variation>H</variation>
    <location>
        <position position="208"/>
    </location>
</feature>
<feature type="sequence variant" id="VAR_068216" description="In COQ10D6; dbSNP:rs1057519350." evidence="4">
    <original>G</original>
    <variation>R</variation>
    <location>
        <position position="255"/>
    </location>
</feature>
<feature type="sequence variant" id="VAR_078122" description="In COQ10D6; uncertain significance; dbSNP:rs371260604." evidence="9">
    <original>P</original>
    <variation>L</variation>
    <location>
        <position position="261"/>
    </location>
</feature>
<feature type="sequence variant" id="VAR_068217" description="In dbSNP:rs17851169." evidence="3">
    <original>E</original>
    <variation>K</variation>
    <location>
        <position position="287"/>
    </location>
</feature>
<feature type="sequence variant" id="VAR_052691" description="In dbSNP:rs1044640.">
    <original>D</original>
    <variation>Y</variation>
    <location>
        <position position="300"/>
    </location>
</feature>
<feature type="sequence variant" id="VAR_033813" description="In dbSNP:rs2074930.">
    <original>D</original>
    <variation>V</variation>
    <location>
        <position position="339"/>
    </location>
</feature>
<feature type="sequence variant" id="VAR_068218" description="In COQ10D6; dbSNP:rs397514479." evidence="4">
    <original>A</original>
    <variation>D</variation>
    <location>
        <position position="353"/>
    </location>
</feature>
<feature type="sequence variant" id="VAR_033814" description="In dbSNP:rs34746680.">
    <original>T</original>
    <variation>M</variation>
    <location>
        <position position="395"/>
    </location>
</feature>
<feature type="sequence variant" id="VAR_014953" description="In dbSNP:rs8500." evidence="11">
    <original>V</original>
    <variation>M</variation>
    <location>
        <position position="406"/>
    </location>
</feature>
<feature type="sequence conflict" description="In Ref. 1; AAD27719." evidence="14" ref="1">
    <original>VSWRRWSGA</original>
    <variation>AVLAQVVRR</variation>
    <location>
        <begin position="22"/>
        <end position="30"/>
    </location>
</feature>
<feature type="sequence conflict" description="In Ref. 1; AAD27719." evidence="14" ref="1">
    <original>A</original>
    <variation>P</variation>
    <location>
        <position position="317"/>
    </location>
</feature>
<feature type="sequence conflict" description="In Ref. 1; AAD27719." evidence="14" ref="1">
    <original>AR</original>
    <variation>PW</variation>
    <location>
        <begin position="336"/>
        <end position="337"/>
    </location>
</feature>
<protein>
    <recommendedName>
        <fullName evidence="2">Ubiquinone biosynthesis monooxygenase COQ6, mitochondrial</fullName>
        <ecNumber evidence="2">1.14.15.45</ecNumber>
    </recommendedName>
    <alternativeName>
        <fullName evidence="2">2-methoxy-6-polyprenolphenol 4-hydroxylase</fullName>
        <ecNumber evidence="10">1.14.15.46</ecNumber>
    </alternativeName>
    <alternativeName>
        <fullName evidence="2">Coenzyme Q10 monooxygenase 6</fullName>
    </alternativeName>
</protein>
<proteinExistence type="evidence at protein level"/>
<gene>
    <name evidence="2" type="primary">COQ6</name>
    <name type="ORF">CGI-10</name>
</gene>
<comment type="function">
    <text evidence="7 10">FAD-dependent monooxygenase required for two non-consecutive steps during ubiquinone biosynthesis (PubMed:26260787, PubMed:38425362). Required for the C5-ring hydroxylation during ubiquinone biosynthesis by catalyzing the hydroxylation of 4-hydroxy-3-(all-trans-decaprenyl)benzoic acid to 3,4-dihydroxy-5-(all-trans-decaprenyl)benzoic acid (PubMed:26260787, PubMed:38425362). Also acts downstream of COQ4, for the C1-hydroxylation during ubiquinone biosynthesis by catalyzing the hydroxylation of 2-methoxy-6-(all-trans-decaprenyl)phenol to 2-methoxy-6-(all-trans-decaprenyl)benzene-1,4-diol (PubMed:38425362). The electrons required for the hydroxylation reaction are funneled indirectly to COQ6 from NADPH via a ferredoxin/ferredoxin reductase system composed of FDX2 and FDXR (PubMed:26260787, PubMed:38425362).</text>
</comment>
<comment type="catalytic activity">
    <reaction evidence="2 7 16">
        <text>4-hydroxy-3-(all-trans-decaprenyl)benzoate + 2 reduced [2Fe-2S]-[ferredoxin] + O2 + 2 H(+) = 3,4-dihydroxy-5-(all-trans-decaprenyl)benzoate + 2 oxidized [2Fe-2S]-[ferredoxin] + H2O</text>
        <dbReference type="Rhea" id="RHEA:81259"/>
        <dbReference type="Rhea" id="RHEA-COMP:10000"/>
        <dbReference type="Rhea" id="RHEA-COMP:10001"/>
        <dbReference type="ChEBI" id="CHEBI:15377"/>
        <dbReference type="ChEBI" id="CHEBI:15378"/>
        <dbReference type="ChEBI" id="CHEBI:15379"/>
        <dbReference type="ChEBI" id="CHEBI:33737"/>
        <dbReference type="ChEBI" id="CHEBI:33738"/>
        <dbReference type="ChEBI" id="CHEBI:62793"/>
        <dbReference type="ChEBI" id="CHEBI:84503"/>
        <dbReference type="EC" id="1.14.15.45"/>
    </reaction>
</comment>
<comment type="catalytic activity">
    <reaction evidence="2 16">
        <text>2-methoxy-6-(all-trans-decaprenyl)phenol + 2 reduced [2Fe-2S]-[ferredoxin] + O2 + 2 H(+) = 2-methoxy-6-(all-trans-decaprenyl)benzene-1,4-diol + 2 oxidized [2Fe-2S]-[ferredoxin] + H2O</text>
        <dbReference type="Rhea" id="RHEA:81295"/>
        <dbReference type="Rhea" id="RHEA-COMP:10000"/>
        <dbReference type="Rhea" id="RHEA-COMP:10001"/>
        <dbReference type="ChEBI" id="CHEBI:15377"/>
        <dbReference type="ChEBI" id="CHEBI:15378"/>
        <dbReference type="ChEBI" id="CHEBI:15379"/>
        <dbReference type="ChEBI" id="CHEBI:33737"/>
        <dbReference type="ChEBI" id="CHEBI:33738"/>
        <dbReference type="ChEBI" id="CHEBI:50774"/>
        <dbReference type="ChEBI" id="CHEBI:64180"/>
        <dbReference type="EC" id="1.14.15.46"/>
    </reaction>
</comment>
<comment type="cofactor">
    <cofactor evidence="2 10">
        <name>FAD</name>
        <dbReference type="ChEBI" id="CHEBI:57692"/>
    </cofactor>
</comment>
<comment type="pathway">
    <text evidence="2 10">Cofactor biosynthesis; ubiquinone biosynthesis.</text>
</comment>
<comment type="subunit">
    <text evidence="2 5 8">Component of a multi-subunit COQ enzyme complex, composed of at least COQ3, COQ4, COQ5, COQ6, COQ7 and COQ9 (PubMed:27499296). Interacts with COQ8B and COQ7 (PubMed:24270420).</text>
</comment>
<comment type="interaction">
    <interactant intactId="EBI-718148">
        <id>Q9Y2Z9</id>
    </interactant>
    <interactant intactId="EBI-10897372">
        <id>Q9NZJ6</id>
        <label>COQ3</label>
    </interactant>
    <organismsDiffer>false</organismsDiffer>
    <experiments>4</experiments>
</comment>
<comment type="interaction">
    <interactant intactId="EBI-718148">
        <id>Q9Y2Z9</id>
    </interactant>
    <interactant intactId="EBI-12284865">
        <id>Q9Y3A0</id>
        <label>COQ4</label>
    </interactant>
    <organismsDiffer>false</organismsDiffer>
    <experiments>3</experiments>
</comment>
<comment type="interaction">
    <interactant intactId="EBI-718148">
        <id>Q9Y2Z9</id>
    </interactant>
    <interactant intactId="EBI-12577722">
        <id>Q5HYK3</id>
        <label>COQ5</label>
    </interactant>
    <organismsDiffer>false</organismsDiffer>
    <experiments>9</experiments>
</comment>
<comment type="interaction">
    <interactant intactId="EBI-718148">
        <id>Q9Y2Z9</id>
    </interactant>
    <interactant intactId="EBI-11017131">
        <id>Q99807</id>
        <label>COQ7</label>
    </interactant>
    <organismsDiffer>false</organismsDiffer>
    <experiments>3</experiments>
</comment>
<comment type="subcellular location">
    <subcellularLocation>
        <location evidence="2 8">Mitochondrion inner membrane</location>
        <topology evidence="2">Peripheral membrane protein</topology>
        <orientation evidence="2">Matrix side</orientation>
    </subcellularLocation>
    <subcellularLocation>
        <location evidence="2">Golgi apparatus</location>
    </subcellularLocation>
    <subcellularLocation>
        <location evidence="2">Cell projection</location>
    </subcellularLocation>
    <text evidence="2">Localizes to cell processes and Golgi apparatus in podocytes.</text>
</comment>
<comment type="alternative products">
    <event type="alternative splicing"/>
    <isoform>
        <id>Q9Y2Z9-1</id>
        <name>1</name>
        <name>a</name>
        <sequence type="displayed"/>
    </isoform>
    <isoform>
        <id>Q9Y2Z9-2</id>
        <name>2</name>
        <name>b</name>
        <sequence type="described" ref="VSP_044060 VSP_044062"/>
    </isoform>
    <isoform>
        <id>Q9Y2Z9-3</id>
        <name>3</name>
        <name>c</name>
        <sequence type="described" ref="VSP_044061"/>
    </isoform>
</comment>
<comment type="tissue specificity">
    <text evidence="4">Widely expressed.</text>
</comment>
<comment type="disease" evidence="4 9">
    <disease id="DI-03445">
        <name>Coenzyme Q10 deficiency, primary, 6</name>
        <acronym>COQ10D6</acronym>
        <description>An autosomal recessive disorder characterized by onset in infancy of severe progressive nephrotic syndrome resulting in end-stage renal failure and sensorineural deafness. Renal biopsy usually shows focal segmental glomerulosclerosis.</description>
        <dbReference type="MIM" id="614650"/>
    </disease>
    <text>The disease is caused by variants affecting the gene represented in this entry.</text>
</comment>
<comment type="disease">
    <text evidence="6">Mutations in COQ6 may play a role in susceptibility to Schwannomatosis, a cancer predisposition syndrome in which patients develop multiple non-vestibular schwannomas, benign neoplasms that arise from Schwann cells of the cranial, peripheral, and autonomic nerves.</text>
</comment>
<comment type="similarity">
    <text evidence="2">Belongs to the UbiH/COQ6 family.</text>
</comment>
<comment type="caution">
    <text evidence="15">Based on current literature, utilization of para-aminobenzoic acid (pABA) involving C4-deamination is still unclear, and seems not to occur in bacteria, plants and mammals where only C5 hydroxylation of HHB has been shown, even if human COQ6 is able to support C4-deamination in yeast cells lacking COQ9.</text>
</comment>